<keyword id="KW-0326">Glycosidase</keyword>
<keyword id="KW-0378">Hydrolase</keyword>
<keyword id="KW-0964">Secreted</keyword>
<keyword id="KW-0732">Signal</keyword>
<protein>
    <recommendedName>
        <fullName evidence="4">Beta-agarase</fullName>
        <ecNumber evidence="3">3.2.1.81</ecNumber>
    </recommendedName>
</protein>
<dbReference type="EC" id="3.2.1.81" evidence="3"/>
<dbReference type="EMBL" id="M22725">
    <property type="protein sequence ID" value="AAA25696.1"/>
    <property type="molecule type" value="Genomic_DNA"/>
</dbReference>
<dbReference type="PIR" id="A32261">
    <property type="entry name" value="A32261"/>
</dbReference>
<dbReference type="SMR" id="P13734"/>
<dbReference type="CAZy" id="GH86">
    <property type="family name" value="Glycoside Hydrolase Family 86"/>
</dbReference>
<dbReference type="GO" id="GO:0005576">
    <property type="term" value="C:extracellular region"/>
    <property type="evidence" value="ECO:0007669"/>
    <property type="project" value="UniProtKB-SubCell"/>
</dbReference>
<dbReference type="GO" id="GO:0033916">
    <property type="term" value="F:beta-agarase activity"/>
    <property type="evidence" value="ECO:0007669"/>
    <property type="project" value="UniProtKB-EC"/>
</dbReference>
<dbReference type="CDD" id="cd21510">
    <property type="entry name" value="agarase_cat"/>
    <property type="match status" value="1"/>
</dbReference>
<dbReference type="Gene3D" id="3.20.20.80">
    <property type="entry name" value="Glycosidases"/>
    <property type="match status" value="1"/>
</dbReference>
<dbReference type="InterPro" id="IPR017853">
    <property type="entry name" value="Glycoside_hydrolase_SF"/>
</dbReference>
<dbReference type="InterPro" id="IPR040527">
    <property type="entry name" value="Porphyrn_b-sand_dom_1"/>
</dbReference>
<dbReference type="Pfam" id="PF18206">
    <property type="entry name" value="Porphyrn_cat_1"/>
    <property type="match status" value="1"/>
</dbReference>
<dbReference type="SUPFAM" id="SSF51445">
    <property type="entry name" value="(Trans)glycosidases"/>
    <property type="match status" value="1"/>
</dbReference>
<comment type="function">
    <text evidence="3">Hydrolase that cleaves agar at the (1-&gt;4) linkage, producing tetrameric saccharide molecules (PubMed:16347536). Is specific for agar and agarose and does not digest alginate or carrageenan (PubMed:16347536).</text>
</comment>
<comment type="catalytic activity">
    <reaction evidence="3">
        <text>Hydrolysis of (1-&gt;4)-beta-D-galactosidic linkages in agarose, giving the tetramer as the predominant product.</text>
        <dbReference type="EC" id="3.2.1.81"/>
    </reaction>
</comment>
<comment type="subcellular location">
    <subcellularLocation>
        <location evidence="3">Secreted</location>
    </subcellularLocation>
</comment>
<comment type="disruption phenotype">
    <text evidence="3">Disruption of the gene results in loss of agarase activity.</text>
</comment>
<comment type="similarity">
    <text evidence="6">Belongs to the glycosyl hydrolase 86 family.</text>
</comment>
<feature type="signal peptide" evidence="2">
    <location>
        <begin position="1"/>
        <end position="23"/>
    </location>
</feature>
<feature type="chain" id="PRO_0000012252" description="Beta-agarase" evidence="2">
    <location>
        <begin position="24"/>
        <end position="505"/>
    </location>
</feature>
<feature type="active site" description="Proton donor" evidence="1">
    <location>
        <position position="200"/>
    </location>
</feature>
<feature type="active site" description="Nucleophile" evidence="1">
    <location>
        <position position="322"/>
    </location>
</feature>
<sequence>MLKVIPWLLVTSSLVAIPTYIHATTEVVVNLNVKHSVEGKSEFERKNHIKLHSTLNDNDWQGEEDKLKYMMEELDVYFGRDNGGTVWNFNQAIEDPANIGYADPQNIIARGQAQRETNWGQNKSALHQYDGRGDLMIGGQPRAHYLGNTSPCCGGSAWQAKGGDAVGDFLGQYVNEFFRSAGDPVTKGHLAPVYFEVLNEPLYQVTDAPHELGLEQPIPPIDIFTFHNDVADAFRQHNTHIKIGGFTVAFPIFEQREFARWEERMKLFIDTSGSHMDVYSTHFYDLEDDNRFKGSRLEATLDMIDQYSLLALGETKPHVISEYGGRNRPMENAPWSALRDWWFLKTASPMLMQFLSRPDSVLTSIPFVPIKALWGTAADGTPYNWRLLRQQKEAPNETGENWVFTEMVKFYQLWSDVKGTRVDTFSTNSDFLIDSYVQNDKAYVLISNLTEQAEKIVVHKYGAPASSQPTTRIKHLYLKGAAPRLMKQVMRQISKKSRLLLKRLW</sequence>
<accession>P13734</accession>
<organism>
    <name type="scientific">Pseudoalteromonas atlantica</name>
    <name type="common">Alteromonas atlantica</name>
    <dbReference type="NCBI Taxonomy" id="288"/>
    <lineage>
        <taxon>Bacteria</taxon>
        <taxon>Pseudomonadati</taxon>
        <taxon>Pseudomonadota</taxon>
        <taxon>Gammaproteobacteria</taxon>
        <taxon>Alteromonadales</taxon>
        <taxon>Pseudoalteromonadaceae</taxon>
        <taxon>Pseudoalteromonas</taxon>
    </lineage>
</organism>
<proteinExistence type="evidence at protein level"/>
<evidence type="ECO:0000250" key="1">
    <source>
        <dbReference type="UniProtKB" id="B5CY96"/>
    </source>
</evidence>
<evidence type="ECO:0000255" key="2"/>
<evidence type="ECO:0000269" key="3">
    <source>
    </source>
</evidence>
<evidence type="ECO:0000303" key="4">
    <source>
    </source>
</evidence>
<evidence type="ECO:0000303" key="5">
    <source>
    </source>
</evidence>
<evidence type="ECO:0000305" key="6"/>
<name>AGAR_PSEAF</name>
<reference key="1">
    <citation type="journal article" date="1989" name="J. Bacteriol.">
        <title>Sequence analysis of the agrA gene encoding beta-agarase from Pseudomonas atlantica.</title>
        <authorList>
            <person name="Belas R."/>
        </authorList>
    </citation>
    <scope>NUCLEOTIDE SEQUENCE [GENOMIC DNA]</scope>
    <source>
        <strain>T6c</strain>
    </source>
</reference>
<reference key="2">
    <citation type="journal article" date="1988" name="Appl. Environ. Microbiol.">
        <title>Cloning and Gene Replacement Mutagenesis of a Pseudomonas atlantica Agarase Gene.</title>
        <authorList>
            <person name="Belas R."/>
            <person name="Bartlett D."/>
            <person name="Silverman M."/>
        </authorList>
    </citation>
    <scope>FUNCTION</scope>
    <scope>CATALYTIC ACTIVITY</scope>
    <scope>SUBCELLULAR LOCATION</scope>
    <scope>DISRUPTION PHENOTYPE</scope>
    <source>
        <strain>T6c</strain>
    </source>
</reference>
<gene>
    <name evidence="4 5" type="primary">agrA</name>
</gene>